<proteinExistence type="inferred from homology"/>
<comment type="function">
    <text evidence="1">Associates with the EF-Tu.GDP complex and induces the exchange of GDP to GTP. It remains bound to the aminoacyl-tRNA.EF-Tu.GTP complex up to the GTP hydrolysis stage on the ribosome.</text>
</comment>
<comment type="subcellular location">
    <subcellularLocation>
        <location evidence="1">Cytoplasm</location>
    </subcellularLocation>
</comment>
<comment type="similarity">
    <text evidence="1">Belongs to the EF-Ts family.</text>
</comment>
<protein>
    <recommendedName>
        <fullName evidence="1">Elongation factor Ts</fullName>
        <shortName evidence="1">EF-Ts</shortName>
    </recommendedName>
</protein>
<name>EFTS_DESDA</name>
<organism>
    <name type="scientific">Desulfovibrio desulfuricans (strain ATCC 27774 / DSM 6949 / MB)</name>
    <dbReference type="NCBI Taxonomy" id="525146"/>
    <lineage>
        <taxon>Bacteria</taxon>
        <taxon>Pseudomonadati</taxon>
        <taxon>Thermodesulfobacteriota</taxon>
        <taxon>Desulfovibrionia</taxon>
        <taxon>Desulfovibrionales</taxon>
        <taxon>Desulfovibrionaceae</taxon>
        <taxon>Desulfovibrio</taxon>
    </lineage>
</organism>
<gene>
    <name evidence="1" type="primary">tsf</name>
    <name type="ordered locus">Ddes_0347</name>
</gene>
<sequence length="286" mass="30692">MAAITAQMVKELREMTGAGMMDCKKALVEVEGDLEKAVDWLRQKGMAKAAKKSGRATSEGLVTVALSDDGKTVAMASLLCETDFVARGDQFQDMAAKVAKSVLDNAPADAAALEALMGEEVTQLIASVGENMQLGRFARHVKPCESSLVGQYIHANGKIGVLVFLTCGKAESVDKPEVQELAKNIAMQVAAASPMALDAASLDQAAVEREREVYRQKALEEGKPANIVDKIADGAVKKFQKEVCLMEQPYIRDDKKTITDVVRETGKAVGDEITVTGFERIQLAAE</sequence>
<dbReference type="EMBL" id="CP001358">
    <property type="protein sequence ID" value="ACL48261.1"/>
    <property type="molecule type" value="Genomic_DNA"/>
</dbReference>
<dbReference type="SMR" id="B8J3M6"/>
<dbReference type="STRING" id="525146.Ddes_0347"/>
<dbReference type="KEGG" id="dds:Ddes_0347"/>
<dbReference type="eggNOG" id="COG0264">
    <property type="taxonomic scope" value="Bacteria"/>
</dbReference>
<dbReference type="HOGENOM" id="CLU_047155_0_0_7"/>
<dbReference type="GO" id="GO:0005737">
    <property type="term" value="C:cytoplasm"/>
    <property type="evidence" value="ECO:0007669"/>
    <property type="project" value="UniProtKB-SubCell"/>
</dbReference>
<dbReference type="GO" id="GO:0003746">
    <property type="term" value="F:translation elongation factor activity"/>
    <property type="evidence" value="ECO:0007669"/>
    <property type="project" value="UniProtKB-UniRule"/>
</dbReference>
<dbReference type="CDD" id="cd14275">
    <property type="entry name" value="UBA_EF-Ts"/>
    <property type="match status" value="1"/>
</dbReference>
<dbReference type="FunFam" id="1.10.8.10:FF:000001">
    <property type="entry name" value="Elongation factor Ts"/>
    <property type="match status" value="1"/>
</dbReference>
<dbReference type="Gene3D" id="1.10.286.20">
    <property type="match status" value="1"/>
</dbReference>
<dbReference type="Gene3D" id="1.10.8.10">
    <property type="entry name" value="DNA helicase RuvA subunit, C-terminal domain"/>
    <property type="match status" value="1"/>
</dbReference>
<dbReference type="Gene3D" id="3.30.479.20">
    <property type="entry name" value="Elongation factor Ts, dimerisation domain"/>
    <property type="match status" value="2"/>
</dbReference>
<dbReference type="HAMAP" id="MF_00050">
    <property type="entry name" value="EF_Ts"/>
    <property type="match status" value="1"/>
</dbReference>
<dbReference type="InterPro" id="IPR036402">
    <property type="entry name" value="EF-Ts_dimer_sf"/>
</dbReference>
<dbReference type="InterPro" id="IPR001816">
    <property type="entry name" value="Transl_elong_EFTs/EF1B"/>
</dbReference>
<dbReference type="InterPro" id="IPR014039">
    <property type="entry name" value="Transl_elong_EFTs/EF1B_dimer"/>
</dbReference>
<dbReference type="InterPro" id="IPR018101">
    <property type="entry name" value="Transl_elong_Ts_CS"/>
</dbReference>
<dbReference type="InterPro" id="IPR009060">
    <property type="entry name" value="UBA-like_sf"/>
</dbReference>
<dbReference type="NCBIfam" id="TIGR00116">
    <property type="entry name" value="tsf"/>
    <property type="match status" value="1"/>
</dbReference>
<dbReference type="PANTHER" id="PTHR11741">
    <property type="entry name" value="ELONGATION FACTOR TS"/>
    <property type="match status" value="1"/>
</dbReference>
<dbReference type="PANTHER" id="PTHR11741:SF0">
    <property type="entry name" value="ELONGATION FACTOR TS, MITOCHONDRIAL"/>
    <property type="match status" value="1"/>
</dbReference>
<dbReference type="Pfam" id="PF00889">
    <property type="entry name" value="EF_TS"/>
    <property type="match status" value="1"/>
</dbReference>
<dbReference type="SUPFAM" id="SSF54713">
    <property type="entry name" value="Elongation factor Ts (EF-Ts), dimerisation domain"/>
    <property type="match status" value="2"/>
</dbReference>
<dbReference type="SUPFAM" id="SSF46934">
    <property type="entry name" value="UBA-like"/>
    <property type="match status" value="1"/>
</dbReference>
<dbReference type="PROSITE" id="PS01126">
    <property type="entry name" value="EF_TS_1"/>
    <property type="match status" value="1"/>
</dbReference>
<accession>B8J3M6</accession>
<reference key="1">
    <citation type="submission" date="2009-01" db="EMBL/GenBank/DDBJ databases">
        <title>Complete sequence of Desulfovibrio desulfuricans subsp. desulfuricans str. ATCC 27774.</title>
        <authorList>
            <consortium name="US DOE Joint Genome Institute"/>
            <person name="Lucas S."/>
            <person name="Copeland A."/>
            <person name="Lapidus A."/>
            <person name="Glavina del Rio T."/>
            <person name="Tice H."/>
            <person name="Bruce D."/>
            <person name="Goodwin L."/>
            <person name="Pitluck S."/>
            <person name="Sims D."/>
            <person name="Lu M."/>
            <person name="Kiss H."/>
            <person name="Meineke L."/>
            <person name="Brettin T."/>
            <person name="Detter J.C."/>
            <person name="Han C."/>
            <person name="Larimer F."/>
            <person name="Land M."/>
            <person name="Hauser L."/>
            <person name="Kyrpides N."/>
            <person name="Ovchinnikova G."/>
            <person name="Hazen T.C."/>
        </authorList>
    </citation>
    <scope>NUCLEOTIDE SEQUENCE [LARGE SCALE GENOMIC DNA]</scope>
    <source>
        <strain>ATCC 27774 / DSM 6949 / MB</strain>
    </source>
</reference>
<feature type="chain" id="PRO_1000117575" description="Elongation factor Ts">
    <location>
        <begin position="1"/>
        <end position="286"/>
    </location>
</feature>
<feature type="region of interest" description="Involved in Mg(2+) ion dislocation from EF-Tu" evidence="1">
    <location>
        <begin position="82"/>
        <end position="85"/>
    </location>
</feature>
<evidence type="ECO:0000255" key="1">
    <source>
        <dbReference type="HAMAP-Rule" id="MF_00050"/>
    </source>
</evidence>
<keyword id="KW-0963">Cytoplasm</keyword>
<keyword id="KW-0251">Elongation factor</keyword>
<keyword id="KW-0648">Protein biosynthesis</keyword>